<organism>
    <name type="scientific">Cucumber green mottle mosaic virus (strain watermelon SH)</name>
    <name type="common">CGMMV</name>
    <dbReference type="NCBI Taxonomy" id="12236"/>
    <lineage>
        <taxon>Viruses</taxon>
        <taxon>Riboviria</taxon>
        <taxon>Orthornavirae</taxon>
        <taxon>Kitrinoviricota</taxon>
        <taxon>Alsuviricetes</taxon>
        <taxon>Martellivirales</taxon>
        <taxon>Virgaviridae</taxon>
        <taxon>Tobamovirus</taxon>
        <taxon>Cucumber green mottle mosaic virus</taxon>
    </lineage>
</organism>
<reference key="1">
    <citation type="journal article" date="1991" name="J. Gen. Virol.">
        <title>The complete nucleotide sequence of cucumber green mottle mosaic virus (SH strain) genomic RNA.</title>
        <authorList>
            <person name="Ugaki M."/>
            <person name="Tomiyama M."/>
            <person name="Kakutani T."/>
            <person name="Hidaka S."/>
            <person name="Kiguchi T."/>
            <person name="Nagata R."/>
            <person name="Sato T."/>
            <person name="Motoyoshi F."/>
            <person name="Nishiguchi M."/>
        </authorList>
    </citation>
    <scope>NUCLEOTIDE SEQUENCE [GENOMIC RNA]</scope>
</reference>
<accession>P69474</accession>
<accession>P19521</accession>
<dbReference type="EMBL" id="D12505">
    <property type="protein sequence ID" value="BAA02071.1"/>
    <property type="molecule type" value="Genomic_RNA"/>
</dbReference>
<dbReference type="PIR" id="JQ1160">
    <property type="entry name" value="VCTMSH"/>
</dbReference>
<dbReference type="RefSeq" id="NP_044580.1">
    <property type="nucleotide sequence ID" value="NC_001801.1"/>
</dbReference>
<dbReference type="SMR" id="P69474"/>
<dbReference type="KEGG" id="vg:1494062"/>
<dbReference type="Proteomes" id="UP000008447">
    <property type="component" value="Segment"/>
</dbReference>
<dbReference type="GO" id="GO:0019029">
    <property type="term" value="C:helical viral capsid"/>
    <property type="evidence" value="ECO:0007669"/>
    <property type="project" value="UniProtKB-KW"/>
</dbReference>
<dbReference type="GO" id="GO:0005198">
    <property type="term" value="F:structural molecule activity"/>
    <property type="evidence" value="ECO:0007669"/>
    <property type="project" value="InterPro"/>
</dbReference>
<dbReference type="Gene3D" id="1.20.120.70">
    <property type="entry name" value="Tobacco mosaic virus-like, coat protein"/>
    <property type="match status" value="1"/>
</dbReference>
<dbReference type="InterPro" id="IPR001337">
    <property type="entry name" value="TMV-like_coat"/>
</dbReference>
<dbReference type="InterPro" id="IPR036417">
    <property type="entry name" value="TMV-like_coat_sf"/>
</dbReference>
<dbReference type="Pfam" id="PF00721">
    <property type="entry name" value="TMV_coat"/>
    <property type="match status" value="1"/>
</dbReference>
<dbReference type="SUPFAM" id="SSF47195">
    <property type="entry name" value="TMV-like viral coat proteins"/>
    <property type="match status" value="1"/>
</dbReference>
<feature type="initiator methionine" description="Removed; by host" evidence="1">
    <location>
        <position position="1"/>
    </location>
</feature>
<feature type="chain" id="PRO_0000144928" description="Capsid protein">
    <location>
        <begin position="2"/>
        <end position="161"/>
    </location>
</feature>
<feature type="modified residue" description="N-acetylalanine; by host" evidence="1">
    <location>
        <position position="2"/>
    </location>
</feature>
<protein>
    <recommendedName>
        <fullName>Capsid protein</fullName>
    </recommendedName>
    <alternativeName>
        <fullName>Coat protein</fullName>
    </alternativeName>
</protein>
<keyword id="KW-0007">Acetylation</keyword>
<keyword id="KW-0167">Capsid protein</keyword>
<keyword id="KW-1139">Helical capsid protein</keyword>
<keyword id="KW-1185">Reference proteome</keyword>
<keyword id="KW-0946">Virion</keyword>
<organismHost>
    <name type="scientific">Citrullus</name>
    <dbReference type="NCBI Taxonomy" id="3653"/>
</organismHost>
<organismHost>
    <name type="scientific">Cucumis sativus</name>
    <name type="common">Cucumber</name>
    <dbReference type="NCBI Taxonomy" id="3659"/>
</organismHost>
<organismHost>
    <name type="scientific">Lagenaria siceraria</name>
    <name type="common">Bottle gourd</name>
    <name type="synonym">Lagenaria leucantha</name>
    <dbReference type="NCBI Taxonomy" id="3668"/>
</organismHost>
<gene>
    <name type="primary">CP</name>
</gene>
<evidence type="ECO:0000250" key="1"/>
<evidence type="ECO:0000305" key="2"/>
<proteinExistence type="inferred from homology"/>
<sequence>MAYNPITPSKLIAFSASYVPVRTLLNFLVASQGTAFQTQAGRDSFRESLSALPSSVVDINSRFPDAGFYAFLNGPVLRPIFVSLLSSTDTRNRVIEVVDPSNPTTAESLNAVKRTDDASTAARAEIDNLIESISKGFDVYDRASFEAAFSVVWSEATTSKA</sequence>
<name>CAPSD_CGMVS</name>
<comment type="function">
    <text>Capsid protein self-assembles to form rod-shaped virions about 18 nm in diameter with a central canal enclosing the viral genomic RNA.</text>
</comment>
<comment type="subcellular location">
    <subcellularLocation>
        <location evidence="2">Virion</location>
    </subcellularLocation>
</comment>
<comment type="similarity">
    <text evidence="2">Belongs to the virgaviridae capsid protein family.</text>
</comment>